<feature type="signal peptide" evidence="2">
    <location>
        <begin position="1"/>
        <end position="29"/>
    </location>
</feature>
<feature type="propeptide" id="PRO_0000457234" description="Removed in mature form" evidence="1">
    <location>
        <begin position="30"/>
        <end status="unknown"/>
    </location>
</feature>
<feature type="peptide" id="PRO_0000457235" description="Serine rich endogenous peptide 11" evidence="1">
    <location>
        <begin status="unknown"/>
        <end position="92"/>
    </location>
</feature>
<feature type="region of interest" description="Disordered" evidence="3">
    <location>
        <begin position="50"/>
        <end position="92"/>
    </location>
</feature>
<feature type="short sequence motif" description="SCOOP motif 1" evidence="9">
    <location>
        <begin position="53"/>
        <end position="67"/>
    </location>
</feature>
<feature type="short sequence motif" description="SxS motif essential for MIK2 binding" evidence="1">
    <location>
        <begin position="59"/>
        <end position="61"/>
    </location>
</feature>
<feature type="short sequence motif" description="SCOOP motif 2" evidence="9">
    <location>
        <begin position="75"/>
        <end position="89"/>
    </location>
</feature>
<feature type="short sequence motif" description="SxS motif essential for MIK2 binding" evidence="1">
    <location>
        <begin position="81"/>
        <end position="83"/>
    </location>
</feature>
<feature type="compositionally biased region" description="Polar residues" evidence="3">
    <location>
        <begin position="53"/>
        <end position="62"/>
    </location>
</feature>
<dbReference type="EMBL" id="AB024024">
    <property type="status" value="NOT_ANNOTATED_CDS"/>
    <property type="molecule type" value="Genomic_DNA"/>
</dbReference>
<dbReference type="EMBL" id="CP002688">
    <property type="protein sequence ID" value="AED95134.1"/>
    <property type="molecule type" value="Genomic_DNA"/>
</dbReference>
<dbReference type="RefSeq" id="NP_001078714.1">
    <property type="nucleotide sequence ID" value="NM_001085245.2"/>
</dbReference>
<dbReference type="PaxDb" id="3702-AT5G44582.1"/>
<dbReference type="PRIDE" id="A8MRU6"/>
<dbReference type="EnsemblPlants" id="AT5G44582.1">
    <property type="protein sequence ID" value="AT5G44582.1"/>
    <property type="gene ID" value="AT5G44582"/>
</dbReference>
<dbReference type="GeneID" id="5008301"/>
<dbReference type="Gramene" id="AT5G44582.1">
    <property type="protein sequence ID" value="AT5G44582.1"/>
    <property type="gene ID" value="AT5G44582"/>
</dbReference>
<dbReference type="KEGG" id="ath:AT5G44582"/>
<dbReference type="Araport" id="AT5G44582"/>
<dbReference type="TAIR" id="AT5G44582"/>
<dbReference type="HOGENOM" id="CLU_2309927_0_0_1"/>
<dbReference type="InParanoid" id="A8MRU6"/>
<dbReference type="OMA" id="GRRMMSY"/>
<dbReference type="PhylomeDB" id="A8MRU6"/>
<dbReference type="PRO" id="PR:A8MRU6"/>
<dbReference type="Proteomes" id="UP000006548">
    <property type="component" value="Chromosome 5"/>
</dbReference>
<dbReference type="ExpressionAtlas" id="A8MRU6">
    <property type="expression patterns" value="baseline and differential"/>
</dbReference>
<dbReference type="GO" id="GO:0048046">
    <property type="term" value="C:apoplast"/>
    <property type="evidence" value="ECO:0000250"/>
    <property type="project" value="UniProtKB"/>
</dbReference>
<dbReference type="GO" id="GO:0005886">
    <property type="term" value="C:plasma membrane"/>
    <property type="evidence" value="ECO:0007669"/>
    <property type="project" value="UniProtKB-SubCell"/>
</dbReference>
<dbReference type="GO" id="GO:0030275">
    <property type="term" value="F:LRR domain binding"/>
    <property type="evidence" value="ECO:0000250"/>
    <property type="project" value="UniProtKB"/>
</dbReference>
<dbReference type="GO" id="GO:0033612">
    <property type="term" value="F:receptor serine/threonine kinase binding"/>
    <property type="evidence" value="ECO:0000250"/>
    <property type="project" value="UniProtKB"/>
</dbReference>
<evidence type="ECO:0000250" key="1">
    <source>
        <dbReference type="UniProtKB" id="B3H7I1"/>
    </source>
</evidence>
<evidence type="ECO:0000255" key="2"/>
<evidence type="ECO:0000256" key="3">
    <source>
        <dbReference type="SAM" id="MobiDB-lite"/>
    </source>
</evidence>
<evidence type="ECO:0000269" key="4">
    <source>
    </source>
</evidence>
<evidence type="ECO:0000269" key="5">
    <source>
    </source>
</evidence>
<evidence type="ECO:0000303" key="6">
    <source>
    </source>
</evidence>
<evidence type="ECO:0000303" key="7">
    <source>
    </source>
</evidence>
<evidence type="ECO:0000305" key="8"/>
<evidence type="ECO:0000305" key="9">
    <source>
    </source>
</evidence>
<evidence type="ECO:0000312" key="10">
    <source>
        <dbReference type="Araport" id="AT5G44582"/>
    </source>
</evidence>
<evidence type="ECO:0000312" key="11">
    <source>
        <dbReference type="EMBL" id="AB024024"/>
    </source>
</evidence>
<comment type="function">
    <text evidence="4">Brassicaceae-specific phytocytokine (plant endogenous peptide released into the apoplast) perceived by MIK2 in a BAK1/SERK3 and SERK4 coreceptors-dependent manner, that modulates various physiological and antimicrobial processes including growth prevention and reactive oxygen species (ROS) response regulation.</text>
</comment>
<comment type="subunit">
    <text evidence="1">Interacts with MIK2 (via extracellular leucine-rich repeat domain); this interaction triggers the formation of complex between MIK2 and the BAK1/SERK3 and SERK4 coreceptors, and subsequent BAK1 activation by phosphorylation.</text>
</comment>
<comment type="subcellular location">
    <subcellularLocation>
        <location evidence="1">Cell membrane</location>
    </subcellularLocation>
    <subcellularLocation>
        <location evidence="1">Secreted</location>
        <location evidence="1">Extracellular space</location>
        <location evidence="1">Apoplast</location>
    </subcellularLocation>
    <text evidence="1">The precursor of SCOOP11, PROSCOOP11, accumulates at the plasma membrane and is proteolytically cleaved to release the SCOOP11 in the apoplasm.</text>
</comment>
<comment type="tissue specificity">
    <text evidence="5">Mostly expressed in seedlings shoots and roots, and, to a lower extent, in leaves.</text>
</comment>
<comment type="similarity">
    <text evidence="8">Belongs to the serine rich endogenous peptide (SCOOP) phytocytokine family.</text>
</comment>
<sequence>MENNTFSSKSINLLILLLLLCTFLCQTESALPSHQELVITGRRMMSYYKPNTDIGTPSSTSDRGGGGNGRRLMSQMDVGASSSGQGGGRNRH</sequence>
<reference key="1">
    <citation type="submission" date="1999-02" db="EMBL/GenBank/DDBJ databases">
        <title>Structural analysis of Arabidopsis thaliana chromosome 5. XI.</title>
        <authorList>
            <person name="Kaneko T."/>
            <person name="Katoh T."/>
            <person name="Asamizu E."/>
            <person name="Sato S."/>
            <person name="Nakamura Y."/>
            <person name="Kotani H."/>
            <person name="Tabata S."/>
        </authorList>
    </citation>
    <scope>NUCLEOTIDE SEQUENCE [LARGE SCALE GENOMIC DNA]</scope>
    <source>
        <strain>cv. Columbia</strain>
    </source>
</reference>
<reference key="2">
    <citation type="journal article" date="2017" name="Plant J.">
        <title>Araport11: a complete reannotation of the Arabidopsis thaliana reference genome.</title>
        <authorList>
            <person name="Cheng C.Y."/>
            <person name="Krishnakumar V."/>
            <person name="Chan A.P."/>
            <person name="Thibaud-Nissen F."/>
            <person name="Schobel S."/>
            <person name="Town C.D."/>
        </authorList>
    </citation>
    <scope>GENOME REANNOTATION</scope>
    <source>
        <strain>cv. Columbia</strain>
    </source>
</reference>
<reference key="3">
    <citation type="journal article" date="2019" name="J. Exp. Bot.">
        <title>The SCOOP12 peptide regulates defense response and root elongation in Arabidopsis thaliana.</title>
        <authorList>
            <person name="Gully K."/>
            <person name="Pelletier S."/>
            <person name="Guillou M.-C."/>
            <person name="Ferrand M."/>
            <person name="Aligon S."/>
            <person name="Pokotylo I."/>
            <person name="Perrin A."/>
            <person name="Vergne E."/>
            <person name="Fagard M."/>
            <person name="Ruelland E."/>
            <person name="Grappin P."/>
            <person name="Bucher E."/>
            <person name="Renou J.-P."/>
            <person name="Aubourg S."/>
        </authorList>
    </citation>
    <scope>GENE FAMILY</scope>
    <source>
        <strain>cv. Columbia</strain>
        <strain>cv. Wassilewskija</strain>
    </source>
</reference>
<reference key="4">
    <citation type="journal article" date="2021" name="Nat. Commun.">
        <title>Perception of a divergent family of phytocytokines by the Arabidopsis receptor kinase MIK2.</title>
        <authorList>
            <person name="Rhodes J."/>
            <person name="Yang H."/>
            <person name="Moussu S."/>
            <person name="Boutrot F."/>
            <person name="Santiago J."/>
            <person name="Zipfel C."/>
        </authorList>
    </citation>
    <scope>FUNCTION</scope>
    <scope>GENE FAMILY</scope>
    <source>
        <strain>cv. Columbia</strain>
        <strain>cv. Wassilewskija-2</strain>
    </source>
</reference>
<reference key="5">
    <citation type="journal article" date="2021" name="Nat. Commun.">
        <title>The Arabidopsis MIK2 receptor elicits immunity by sensing a conserved signature from phytocytokines and microbes.</title>
        <authorList>
            <person name="Hou S."/>
            <person name="Liu D."/>
            <person name="Huang S."/>
            <person name="Luo D."/>
            <person name="Liu Z."/>
            <person name="Xiang Q."/>
            <person name="Wang P."/>
            <person name="Mu R."/>
            <person name="Han Z."/>
            <person name="Chen S."/>
            <person name="Chai J."/>
            <person name="Shan L."/>
            <person name="He P."/>
        </authorList>
    </citation>
    <scope>TISSUE SPECIFICITY</scope>
    <scope>GENE FAMILY</scope>
    <scope>NOMENCLATURE</scope>
    <source>
        <strain>cv. Columbia</strain>
    </source>
</reference>
<proteinExistence type="evidence at transcript level"/>
<keyword id="KW-0052">Apoplast</keyword>
<keyword id="KW-1003">Cell membrane</keyword>
<keyword id="KW-0165">Cleavage on pair of basic residues</keyword>
<keyword id="KW-0472">Membrane</keyword>
<keyword id="KW-1185">Reference proteome</keyword>
<keyword id="KW-0964">Secreted</keyword>
<keyword id="KW-0732">Signal</keyword>
<accession>A8MRU6</accession>
<protein>
    <recommendedName>
        <fullName evidence="6 7">Serine rich endogenous peptide 11</fullName>
        <shortName evidence="6 7">AtSCOOP11</shortName>
    </recommendedName>
    <alternativeName>
        <fullName evidence="6 7">Phytocytokine SCOOP11</fullName>
    </alternativeName>
    <alternativeName>
        <fullName evidence="6 7">Precursor of serine rich endogenous peptide phytocytokine 11</fullName>
    </alternativeName>
</protein>
<gene>
    <name evidence="6 7" type="primary">PROSCOOP11</name>
    <name evidence="6 7" type="synonym">SCOOP11</name>
    <name evidence="10" type="ordered locus">At5g44582</name>
    <name evidence="11" type="ORF">K15C23</name>
</gene>
<organism>
    <name type="scientific">Arabidopsis thaliana</name>
    <name type="common">Mouse-ear cress</name>
    <dbReference type="NCBI Taxonomy" id="3702"/>
    <lineage>
        <taxon>Eukaryota</taxon>
        <taxon>Viridiplantae</taxon>
        <taxon>Streptophyta</taxon>
        <taxon>Embryophyta</taxon>
        <taxon>Tracheophyta</taxon>
        <taxon>Spermatophyta</taxon>
        <taxon>Magnoliopsida</taxon>
        <taxon>eudicotyledons</taxon>
        <taxon>Gunneridae</taxon>
        <taxon>Pentapetalae</taxon>
        <taxon>rosids</taxon>
        <taxon>malvids</taxon>
        <taxon>Brassicales</taxon>
        <taxon>Brassicaceae</taxon>
        <taxon>Camelineae</taxon>
        <taxon>Arabidopsis</taxon>
    </lineage>
</organism>
<name>SOP11_ARATH</name>